<protein>
    <recommendedName>
        <fullName evidence="1">Chaperone protein HtpG</fullName>
    </recommendedName>
    <alternativeName>
        <fullName evidence="1">Heat shock protein HtpG</fullName>
    </alternativeName>
    <alternativeName>
        <fullName evidence="1">High temperature protein G</fullName>
    </alternativeName>
</protein>
<name>HTPG_BUCAI</name>
<gene>
    <name evidence="1" type="primary">htpG</name>
    <name type="ordered locus">BU483</name>
</gene>
<proteinExistence type="inferred from homology"/>
<reference key="1">
    <citation type="journal article" date="2000" name="Nature">
        <title>Genome sequence of the endocellular bacterial symbiont of aphids Buchnera sp. APS.</title>
        <authorList>
            <person name="Shigenobu S."/>
            <person name="Watanabe H."/>
            <person name="Hattori M."/>
            <person name="Sakaki Y."/>
            <person name="Ishikawa H."/>
        </authorList>
    </citation>
    <scope>NUCLEOTIDE SEQUENCE [LARGE SCALE GENOMIC DNA]</scope>
    <source>
        <strain>APS</strain>
    </source>
</reference>
<evidence type="ECO:0000255" key="1">
    <source>
        <dbReference type="HAMAP-Rule" id="MF_00505"/>
    </source>
</evidence>
<keyword id="KW-0067">ATP-binding</keyword>
<keyword id="KW-0143">Chaperone</keyword>
<keyword id="KW-0963">Cytoplasm</keyword>
<keyword id="KW-0547">Nucleotide-binding</keyword>
<keyword id="KW-1185">Reference proteome</keyword>
<keyword id="KW-0346">Stress response</keyword>
<comment type="function">
    <text evidence="1">Molecular chaperone. Has ATPase activity.</text>
</comment>
<comment type="subunit">
    <text evidence="1">Homodimer.</text>
</comment>
<comment type="subcellular location">
    <subcellularLocation>
        <location evidence="1">Cytoplasm</location>
    </subcellularLocation>
</comment>
<comment type="similarity">
    <text evidence="1">Belongs to the heat shock protein 90 family.</text>
</comment>
<sequence length="624" mass="72816">MKTQKKEVYNFQSETKKLLHLMIHSLYSNKEIFLRELISNSSDAIDKLRFESISSPELYENDSDVKIQISINKAQRTLIISDNGIGMTKEDTIENLGTIAKSGTKSFLQSLEQKQNKKNELIGEFGVGFYSSFIVSEKVSVRTRFAGLESNKGILWESSGEGEYNITNIVKKTRGTEITLFLKKEEEEFLETWRIKNIISKYSDHITIPIHIQDYDKKNKTYFWEQINKAKALWTLNKSSITEEEYKDFYKHLTNDQNDPLIWSHNHVEGNQEYISLLYIPEKAAWDIWNRDNKHGLKLYVKRVYIMDNSQAFLPNYLRFIKGLIDSSDLPLNISREILQDNSITEKLRKSLIKKSLSMLEKLAQKNNEKYQIFWNQFGLVLKEGPAEDHENLNKIANLLRFTSMKSNNSEQKMSLKEYISNMNEQQEKIYYITADSYSSANNSPHLELFKKNNIDVLLLSDRIDEWMMNYLSEFEGKKFQSISKEDISLNKLTKEKKIKNKDVSTEMIEFLKKVKNILGNQVKDVRLTHRLTETPCVLLSDSTEMTTQMAKLFSAAGQSVPELKYIFEINPDHILIKKICTINNENELHQWIKLLLDQALLAEKGNLENPHKFISRMNKLLIK</sequence>
<organism>
    <name type="scientific">Buchnera aphidicola subsp. Acyrthosiphon pisum (strain APS)</name>
    <name type="common">Acyrthosiphon pisum symbiotic bacterium</name>
    <dbReference type="NCBI Taxonomy" id="107806"/>
    <lineage>
        <taxon>Bacteria</taxon>
        <taxon>Pseudomonadati</taxon>
        <taxon>Pseudomonadota</taxon>
        <taxon>Gammaproteobacteria</taxon>
        <taxon>Enterobacterales</taxon>
        <taxon>Erwiniaceae</taxon>
        <taxon>Buchnera</taxon>
    </lineage>
</organism>
<accession>P57555</accession>
<dbReference type="EMBL" id="BA000003">
    <property type="protein sequence ID" value="BAB13180.1"/>
    <property type="molecule type" value="Genomic_DNA"/>
</dbReference>
<dbReference type="RefSeq" id="NP_240294.1">
    <property type="nucleotide sequence ID" value="NC_002528.1"/>
</dbReference>
<dbReference type="RefSeq" id="WP_009874437.1">
    <property type="nucleotide sequence ID" value="NC_002528.1"/>
</dbReference>
<dbReference type="SMR" id="P57555"/>
<dbReference type="STRING" id="563178.BUAP5A_476"/>
<dbReference type="EnsemblBacteria" id="BAB13180">
    <property type="protein sequence ID" value="BAB13180"/>
    <property type="gene ID" value="BAB13180"/>
</dbReference>
<dbReference type="KEGG" id="buc:BU483"/>
<dbReference type="PATRIC" id="fig|107806.10.peg.492"/>
<dbReference type="eggNOG" id="COG0326">
    <property type="taxonomic scope" value="Bacteria"/>
</dbReference>
<dbReference type="HOGENOM" id="CLU_006684_3_0_6"/>
<dbReference type="Proteomes" id="UP000001806">
    <property type="component" value="Chromosome"/>
</dbReference>
<dbReference type="GO" id="GO:0005737">
    <property type="term" value="C:cytoplasm"/>
    <property type="evidence" value="ECO:0007669"/>
    <property type="project" value="UniProtKB-SubCell"/>
</dbReference>
<dbReference type="GO" id="GO:0005524">
    <property type="term" value="F:ATP binding"/>
    <property type="evidence" value="ECO:0007669"/>
    <property type="project" value="UniProtKB-UniRule"/>
</dbReference>
<dbReference type="GO" id="GO:0016887">
    <property type="term" value="F:ATP hydrolysis activity"/>
    <property type="evidence" value="ECO:0007669"/>
    <property type="project" value="InterPro"/>
</dbReference>
<dbReference type="GO" id="GO:0140662">
    <property type="term" value="F:ATP-dependent protein folding chaperone"/>
    <property type="evidence" value="ECO:0007669"/>
    <property type="project" value="InterPro"/>
</dbReference>
<dbReference type="GO" id="GO:0051082">
    <property type="term" value="F:unfolded protein binding"/>
    <property type="evidence" value="ECO:0007669"/>
    <property type="project" value="UniProtKB-UniRule"/>
</dbReference>
<dbReference type="CDD" id="cd16927">
    <property type="entry name" value="HATPase_Hsp90-like"/>
    <property type="match status" value="1"/>
</dbReference>
<dbReference type="FunFam" id="3.30.230.80:FF:000002">
    <property type="entry name" value="Molecular chaperone HtpG"/>
    <property type="match status" value="1"/>
</dbReference>
<dbReference type="FunFam" id="3.30.565.10:FF:000009">
    <property type="entry name" value="Molecular chaperone HtpG"/>
    <property type="match status" value="1"/>
</dbReference>
<dbReference type="Gene3D" id="3.30.230.80">
    <property type="match status" value="1"/>
</dbReference>
<dbReference type="Gene3D" id="3.40.50.11260">
    <property type="match status" value="1"/>
</dbReference>
<dbReference type="Gene3D" id="1.20.120.790">
    <property type="entry name" value="Heat shock protein 90, C-terminal domain"/>
    <property type="match status" value="1"/>
</dbReference>
<dbReference type="Gene3D" id="3.30.565.10">
    <property type="entry name" value="Histidine kinase-like ATPase, C-terminal domain"/>
    <property type="match status" value="1"/>
</dbReference>
<dbReference type="HAMAP" id="MF_00505">
    <property type="entry name" value="HSP90"/>
    <property type="match status" value="1"/>
</dbReference>
<dbReference type="InterPro" id="IPR036890">
    <property type="entry name" value="HATPase_C_sf"/>
</dbReference>
<dbReference type="InterPro" id="IPR019805">
    <property type="entry name" value="Heat_shock_protein_90_CS"/>
</dbReference>
<dbReference type="InterPro" id="IPR037196">
    <property type="entry name" value="HSP90_C"/>
</dbReference>
<dbReference type="InterPro" id="IPR001404">
    <property type="entry name" value="Hsp90_fam"/>
</dbReference>
<dbReference type="InterPro" id="IPR020575">
    <property type="entry name" value="Hsp90_N"/>
</dbReference>
<dbReference type="InterPro" id="IPR020568">
    <property type="entry name" value="Ribosomal_Su5_D2-typ_SF"/>
</dbReference>
<dbReference type="NCBIfam" id="NF003555">
    <property type="entry name" value="PRK05218.1"/>
    <property type="match status" value="1"/>
</dbReference>
<dbReference type="PANTHER" id="PTHR11528">
    <property type="entry name" value="HEAT SHOCK PROTEIN 90 FAMILY MEMBER"/>
    <property type="match status" value="1"/>
</dbReference>
<dbReference type="Pfam" id="PF13589">
    <property type="entry name" value="HATPase_c_3"/>
    <property type="match status" value="1"/>
</dbReference>
<dbReference type="Pfam" id="PF00183">
    <property type="entry name" value="HSP90"/>
    <property type="match status" value="1"/>
</dbReference>
<dbReference type="PIRSF" id="PIRSF002583">
    <property type="entry name" value="Hsp90"/>
    <property type="match status" value="1"/>
</dbReference>
<dbReference type="PRINTS" id="PR00775">
    <property type="entry name" value="HEATSHOCK90"/>
</dbReference>
<dbReference type="SMART" id="SM00387">
    <property type="entry name" value="HATPase_c"/>
    <property type="match status" value="1"/>
</dbReference>
<dbReference type="SUPFAM" id="SSF55874">
    <property type="entry name" value="ATPase domain of HSP90 chaperone/DNA topoisomerase II/histidine kinase"/>
    <property type="match status" value="1"/>
</dbReference>
<dbReference type="SUPFAM" id="SSF110942">
    <property type="entry name" value="HSP90 C-terminal domain"/>
    <property type="match status" value="1"/>
</dbReference>
<dbReference type="SUPFAM" id="SSF54211">
    <property type="entry name" value="Ribosomal protein S5 domain 2-like"/>
    <property type="match status" value="1"/>
</dbReference>
<dbReference type="PROSITE" id="PS00298">
    <property type="entry name" value="HSP90"/>
    <property type="match status" value="1"/>
</dbReference>
<feature type="chain" id="PRO_0000062975" description="Chaperone protein HtpG">
    <location>
        <begin position="1"/>
        <end position="624"/>
    </location>
</feature>
<feature type="region of interest" description="A; substrate-binding" evidence="1">
    <location>
        <begin position="1"/>
        <end position="336"/>
    </location>
</feature>
<feature type="region of interest" description="B" evidence="1">
    <location>
        <begin position="337"/>
        <end position="552"/>
    </location>
</feature>
<feature type="region of interest" description="C" evidence="1">
    <location>
        <begin position="553"/>
        <end position="624"/>
    </location>
</feature>